<keyword id="KW-1185">Reference proteome</keyword>
<gene>
    <name type="ORF">ORF97</name>
</gene>
<evidence type="ECO:0000305" key="1"/>
<dbReference type="EMBL" id="U39146">
    <property type="protein sequence ID" value="AAB60603.1"/>
    <property type="molecule type" value="Genomic_DNA"/>
</dbReference>
<dbReference type="EMBL" id="U75930">
    <property type="protein sequence ID" value="AAC59096.1"/>
    <property type="molecule type" value="Genomic_DNA"/>
</dbReference>
<dbReference type="RefSeq" id="NP_046253.1">
    <property type="nucleotide sequence ID" value="NC_001875.2"/>
</dbReference>
<dbReference type="KEGG" id="vg:912078"/>
<dbReference type="OrthoDB" id="16714at10239"/>
<dbReference type="Proteomes" id="UP000009248">
    <property type="component" value="Genome"/>
</dbReference>
<dbReference type="InterPro" id="IPR006883">
    <property type="entry name" value="AcMNPV_PIF-4"/>
</dbReference>
<dbReference type="Pfam" id="PF04798">
    <property type="entry name" value="Baculo_19"/>
    <property type="match status" value="1"/>
</dbReference>
<organism>
    <name type="scientific">Orgyia pseudotsugata multicapsid polyhedrosis virus</name>
    <name type="common">OpMNPV</name>
    <dbReference type="NCBI Taxonomy" id="262177"/>
    <lineage>
        <taxon>Viruses</taxon>
        <taxon>Viruses incertae sedis</taxon>
        <taxon>Naldaviricetes</taxon>
        <taxon>Lefavirales</taxon>
        <taxon>Baculoviridae</taxon>
        <taxon>Alphabaculovirus</taxon>
        <taxon>Alphabaculovirus orpseudotsugatae</taxon>
    </lineage>
</organism>
<sequence length="172" mass="19404">MLFMMAAIALAVLLFMYVAVALRDHHPFLNRVQALLRDFDNTLLYGTHVRIYDLSTPARTERLFIIAPENVVLYNFDKTLYYYLDSANVFCPNEYTVAKFTGATIRTVNDTGVYSTACTVVGSLTLIEHFVGLKNNSPDHTLVLDVAEQIQFTIMDVINYLIYNGYVDIAAG</sequence>
<feature type="chain" id="PRO_0000133028" description="Uncharacterized 19.4 kDa protein">
    <location>
        <begin position="1"/>
        <end position="172"/>
    </location>
</feature>
<accession>Q83951</accession>
<accession>O12558</accession>
<accession>O12847</accession>
<name>Y096_NPVOP</name>
<comment type="similarity">
    <text evidence="1">Belongs to the baculoviridae 19 kDa protein family.</text>
</comment>
<proteinExistence type="inferred from homology"/>
<protein>
    <recommendedName>
        <fullName>Uncharacterized 19.4 kDa protein</fullName>
    </recommendedName>
    <alternativeName>
        <fullName>ORF97</fullName>
    </alternativeName>
</protein>
<organismHost>
    <name type="scientific">Orgyia pseudotsugata</name>
    <name type="common">Douglas-fir tussock moth</name>
    <dbReference type="NCBI Taxonomy" id="33414"/>
</organismHost>
<reference key="1">
    <citation type="journal article" date="1996" name="J. Gen. Virol.">
        <title>The DNA polymerase and helicase genes of a baculovirus of Orgyia pseudosugata.</title>
        <authorList>
            <person name="Ahrens C.H."/>
            <person name="Rohrmann G.F."/>
        </authorList>
    </citation>
    <scope>NUCLEOTIDE SEQUENCE [GENOMIC DNA]</scope>
</reference>
<reference key="2">
    <citation type="journal article" date="1997" name="Virology">
        <title>The sequence of the Orgyia pseudotsugata multinucleocapsid nuclear polyhedrosis virus genome.</title>
        <authorList>
            <person name="Ahrens C.H."/>
            <person name="Russell R.R."/>
            <person name="Funk C.J."/>
            <person name="Evans J."/>
            <person name="Harwood S."/>
            <person name="Rohrmann G.F."/>
        </authorList>
    </citation>
    <scope>NUCLEOTIDE SEQUENCE [LARGE SCALE GENOMIC DNA]</scope>
</reference>